<evidence type="ECO:0000255" key="1">
    <source>
        <dbReference type="HAMAP-Rule" id="MF_01322"/>
    </source>
</evidence>
<accession>A4IWA0</accession>
<comment type="function">
    <text evidence="1">DNA-dependent RNA polymerase catalyzes the transcription of DNA into RNA using the four ribonucleoside triphosphates as substrates.</text>
</comment>
<comment type="catalytic activity">
    <reaction evidence="1">
        <text>RNA(n) + a ribonucleoside 5'-triphosphate = RNA(n+1) + diphosphate</text>
        <dbReference type="Rhea" id="RHEA:21248"/>
        <dbReference type="Rhea" id="RHEA-COMP:14527"/>
        <dbReference type="Rhea" id="RHEA-COMP:17342"/>
        <dbReference type="ChEBI" id="CHEBI:33019"/>
        <dbReference type="ChEBI" id="CHEBI:61557"/>
        <dbReference type="ChEBI" id="CHEBI:140395"/>
        <dbReference type="EC" id="2.7.7.6"/>
    </reaction>
</comment>
<comment type="cofactor">
    <cofactor evidence="1">
        <name>Mg(2+)</name>
        <dbReference type="ChEBI" id="CHEBI:18420"/>
    </cofactor>
    <text evidence="1">Binds 1 Mg(2+) ion per subunit.</text>
</comment>
<comment type="cofactor">
    <cofactor evidence="1">
        <name>Zn(2+)</name>
        <dbReference type="ChEBI" id="CHEBI:29105"/>
    </cofactor>
    <text evidence="1">Binds 2 Zn(2+) ions per subunit.</text>
</comment>
<comment type="subunit">
    <text evidence="1">The RNAP catalytic core consists of 2 alpha, 1 beta, 1 beta' and 1 omega subunit. When a sigma factor is associated with the core the holoenzyme is formed, which can initiate transcription.</text>
</comment>
<comment type="similarity">
    <text evidence="1">Belongs to the RNA polymerase beta' chain family.</text>
</comment>
<feature type="chain" id="PRO_0000353372" description="DNA-directed RNA polymerase subunit beta'">
    <location>
        <begin position="1"/>
        <end position="1417"/>
    </location>
</feature>
<feature type="binding site" evidence="1">
    <location>
        <position position="68"/>
    </location>
    <ligand>
        <name>Zn(2+)</name>
        <dbReference type="ChEBI" id="CHEBI:29105"/>
        <label>1</label>
    </ligand>
</feature>
<feature type="binding site" evidence="1">
    <location>
        <position position="70"/>
    </location>
    <ligand>
        <name>Zn(2+)</name>
        <dbReference type="ChEBI" id="CHEBI:29105"/>
        <label>1</label>
    </ligand>
</feature>
<feature type="binding site" evidence="1">
    <location>
        <position position="83"/>
    </location>
    <ligand>
        <name>Zn(2+)</name>
        <dbReference type="ChEBI" id="CHEBI:29105"/>
        <label>1</label>
    </ligand>
</feature>
<feature type="binding site" evidence="1">
    <location>
        <position position="86"/>
    </location>
    <ligand>
        <name>Zn(2+)</name>
        <dbReference type="ChEBI" id="CHEBI:29105"/>
        <label>1</label>
    </ligand>
</feature>
<feature type="binding site" evidence="1">
    <location>
        <position position="458"/>
    </location>
    <ligand>
        <name>Mg(2+)</name>
        <dbReference type="ChEBI" id="CHEBI:18420"/>
    </ligand>
</feature>
<feature type="binding site" evidence="1">
    <location>
        <position position="460"/>
    </location>
    <ligand>
        <name>Mg(2+)</name>
        <dbReference type="ChEBI" id="CHEBI:18420"/>
    </ligand>
</feature>
<feature type="binding site" evidence="1">
    <location>
        <position position="462"/>
    </location>
    <ligand>
        <name>Mg(2+)</name>
        <dbReference type="ChEBI" id="CHEBI:18420"/>
    </ligand>
</feature>
<feature type="binding site" evidence="1">
    <location>
        <position position="811"/>
    </location>
    <ligand>
        <name>Zn(2+)</name>
        <dbReference type="ChEBI" id="CHEBI:29105"/>
        <label>2</label>
    </ligand>
</feature>
<feature type="binding site" evidence="1">
    <location>
        <position position="884"/>
    </location>
    <ligand>
        <name>Zn(2+)</name>
        <dbReference type="ChEBI" id="CHEBI:29105"/>
        <label>2</label>
    </ligand>
</feature>
<feature type="binding site" evidence="1">
    <location>
        <position position="891"/>
    </location>
    <ligand>
        <name>Zn(2+)</name>
        <dbReference type="ChEBI" id="CHEBI:29105"/>
        <label>2</label>
    </ligand>
</feature>
<feature type="binding site" evidence="1">
    <location>
        <position position="894"/>
    </location>
    <ligand>
        <name>Zn(2+)</name>
        <dbReference type="ChEBI" id="CHEBI:29105"/>
        <label>2</label>
    </ligand>
</feature>
<reference key="1">
    <citation type="journal article" date="2007" name="PLoS ONE">
        <title>Complete genomic characterization of a pathogenic A.II strain of Francisella tularensis subspecies tularensis.</title>
        <authorList>
            <person name="Beckstrom-Sternberg S.M."/>
            <person name="Auerbach R.K."/>
            <person name="Godbole S."/>
            <person name="Pearson J.V."/>
            <person name="Beckstrom-Sternberg J.S."/>
            <person name="Deng Z."/>
            <person name="Munk C."/>
            <person name="Kubota K."/>
            <person name="Zhou Y."/>
            <person name="Bruce D."/>
            <person name="Noronha J."/>
            <person name="Scheuermann R.H."/>
            <person name="Wang A."/>
            <person name="Wei X."/>
            <person name="Wang J."/>
            <person name="Hao J."/>
            <person name="Wagner D.M."/>
            <person name="Brettin T.S."/>
            <person name="Brown N."/>
            <person name="Gilna P."/>
            <person name="Keim P.S."/>
        </authorList>
    </citation>
    <scope>NUCLEOTIDE SEQUENCE [LARGE SCALE GENOMIC DNA]</scope>
    <source>
        <strain>WY96-3418</strain>
    </source>
</reference>
<sequence length="1417" mass="157417">MNNGILHQNYNSKKFDIIKISLASPEVIRSWSHGEVKKPETINYRTFKPERDGLFCAKIFGPIKDYECLCGKYKRLKHRGVVCERCGVEVEQAKVRRERMGHIDLVCPVVHIWYLKSLPSRIGLFLDMPLKNVEKVLYFESYIVTDPGMTPLEKKQLLTDEEYAEALENYGYEFEASMGAEAIRDLLADTDIESEIELLQAECEESKSTAKKEKAIKRLRLLETFQASGNKPEWMVMTVLPVLPPDLRPLVPIEGGRFATSDLNDLYRRVINRNNRLKKLLDLNAPDIIVRNEKRMLQEAVDALLDNGRRGRAVTGSNKRPLKSLADMIKGKQGRFRQNLLGKRVDYSGRSVITVGPSLRLHECGLPKKMALELFKPFVYSKLRLGGHATTIKQAKRMVELEEAVVWDILETVINEHPVLLNRAPTLHRLGIQAFEPRLIEGKAIQLHPLVCAAFNADFDGDQMAVHVPLTVESQLEARVLMMSTNNILSPASGQPIITPTQDIVLGLYYITREKEGARGEGKLFSSYEDVSRAYNSGTIDIHAKIKLRIDRQVFDTKGNTYNEKGVVNTTVGRALLLNILPEGLSFSLLNKVLVKKEISKIINQAFRVLGGKATVVLADKLMYAGFKYSTLSGVSVGVDDMTIPDNKEAKIEEAEKEIKQITEQYQSSLITENERYNNIINIWSKTSDEVGASMMDAISKDTVSINGEKKEIESFNSVYMMAKSGARGSYNQMRQLAGMRGLMAKPDGTMIETAITANFREGLSVLQYFTSTHGARKGLADTALKTANAGYLTRRLVDVAQDLVVIEEDCGTDDGLMFSAIVEDGEVKVPLVERALGRTLAADVVTEKGVVLLEAGTLLDENLVELLDDNGIDMIKVRSPITCKTRRGLCAKCYGRDLARERQVNVGESVGVIAAQSIGEPGTQLTMRTFHTGGAASLGITVSDIKVKTAGKIKFKNIRTVTNKEGQEIVISRAGEIIVSDTMGRVREQHKIPMGAVVPLASGKAVEIGDVIATWDPHAQPLITDVAGKVVLEDVIDGITSKHTYDDLTGQQTIEITSISQRTTSKNLKPVVKIVDEKGAELKSIPLAVGAVLNVADDSILEVGDIVAKIPLEGSKNKDITGGLPRVAELFEARRPKDAAILSPCDGMVRLGNRDTKEKQRIEIIDKNGHIVEEILLPKSRHLVVFDGEQVSRGDVLADGPTDPHDLLKYKGLEEFADYILIEAQSVYRMQGVVINDKHIETIVRQMLRKAVILDEGDSKFVKDESIELVRILEENDKLRKQGKKEVEYELVLMGITRSSLSTESFLSAASFQETTRVLTEASINSQIDNLRGLKENVLIGRLIPTGTGLAVRKESAKIEKMREELGVEDNMVFTDLSSFNPEEISFDSIQSQKEDKDINEDIEESLRNALESLDF</sequence>
<gene>
    <name evidence="1" type="primary">rpoC</name>
    <name type="ordered locus">FTW_0235</name>
</gene>
<proteinExistence type="inferred from homology"/>
<name>RPOC_FRATW</name>
<protein>
    <recommendedName>
        <fullName evidence="1">DNA-directed RNA polymerase subunit beta'</fullName>
        <shortName evidence="1">RNAP subunit beta'</shortName>
        <ecNumber evidence="1">2.7.7.6</ecNumber>
    </recommendedName>
    <alternativeName>
        <fullName evidence="1">RNA polymerase subunit beta'</fullName>
    </alternativeName>
    <alternativeName>
        <fullName evidence="1">Transcriptase subunit beta'</fullName>
    </alternativeName>
</protein>
<organism>
    <name type="scientific">Francisella tularensis subsp. tularensis (strain WY96-3418)</name>
    <dbReference type="NCBI Taxonomy" id="418136"/>
    <lineage>
        <taxon>Bacteria</taxon>
        <taxon>Pseudomonadati</taxon>
        <taxon>Pseudomonadota</taxon>
        <taxon>Gammaproteobacteria</taxon>
        <taxon>Thiotrichales</taxon>
        <taxon>Francisellaceae</taxon>
        <taxon>Francisella</taxon>
    </lineage>
</organism>
<dbReference type="EC" id="2.7.7.6" evidence="1"/>
<dbReference type="EMBL" id="CP000608">
    <property type="protein sequence ID" value="ABO46202.1"/>
    <property type="molecule type" value="Genomic_DNA"/>
</dbReference>
<dbReference type="RefSeq" id="WP_003019910.1">
    <property type="nucleotide sequence ID" value="NC_009257.1"/>
</dbReference>
<dbReference type="SMR" id="A4IWA0"/>
<dbReference type="KEGG" id="ftw:FTW_0235"/>
<dbReference type="HOGENOM" id="CLU_000524_3_1_6"/>
<dbReference type="GO" id="GO:0000428">
    <property type="term" value="C:DNA-directed RNA polymerase complex"/>
    <property type="evidence" value="ECO:0007669"/>
    <property type="project" value="UniProtKB-KW"/>
</dbReference>
<dbReference type="GO" id="GO:0003677">
    <property type="term" value="F:DNA binding"/>
    <property type="evidence" value="ECO:0007669"/>
    <property type="project" value="UniProtKB-UniRule"/>
</dbReference>
<dbReference type="GO" id="GO:0003899">
    <property type="term" value="F:DNA-directed RNA polymerase activity"/>
    <property type="evidence" value="ECO:0007669"/>
    <property type="project" value="UniProtKB-UniRule"/>
</dbReference>
<dbReference type="GO" id="GO:0000287">
    <property type="term" value="F:magnesium ion binding"/>
    <property type="evidence" value="ECO:0007669"/>
    <property type="project" value="UniProtKB-UniRule"/>
</dbReference>
<dbReference type="GO" id="GO:0008270">
    <property type="term" value="F:zinc ion binding"/>
    <property type="evidence" value="ECO:0007669"/>
    <property type="project" value="UniProtKB-UniRule"/>
</dbReference>
<dbReference type="GO" id="GO:0006351">
    <property type="term" value="P:DNA-templated transcription"/>
    <property type="evidence" value="ECO:0007669"/>
    <property type="project" value="UniProtKB-UniRule"/>
</dbReference>
<dbReference type="CDD" id="cd02655">
    <property type="entry name" value="RNAP_beta'_C"/>
    <property type="match status" value="1"/>
</dbReference>
<dbReference type="CDD" id="cd01609">
    <property type="entry name" value="RNAP_beta'_N"/>
    <property type="match status" value="1"/>
</dbReference>
<dbReference type="FunFam" id="1.10.132.30:FF:000003">
    <property type="entry name" value="DNA-directed RNA polymerase subunit beta"/>
    <property type="match status" value="1"/>
</dbReference>
<dbReference type="Gene3D" id="1.10.132.30">
    <property type="match status" value="1"/>
</dbReference>
<dbReference type="Gene3D" id="1.10.150.390">
    <property type="match status" value="1"/>
</dbReference>
<dbReference type="Gene3D" id="1.10.1790.20">
    <property type="match status" value="1"/>
</dbReference>
<dbReference type="Gene3D" id="1.10.40.90">
    <property type="match status" value="1"/>
</dbReference>
<dbReference type="Gene3D" id="2.40.40.20">
    <property type="match status" value="1"/>
</dbReference>
<dbReference type="Gene3D" id="2.40.50.100">
    <property type="match status" value="3"/>
</dbReference>
<dbReference type="Gene3D" id="4.10.860.120">
    <property type="entry name" value="RNA polymerase II, clamp domain"/>
    <property type="match status" value="1"/>
</dbReference>
<dbReference type="Gene3D" id="1.10.274.100">
    <property type="entry name" value="RNA polymerase Rpb1, domain 3"/>
    <property type="match status" value="1"/>
</dbReference>
<dbReference type="HAMAP" id="MF_01322">
    <property type="entry name" value="RNApol_bact_RpoC"/>
    <property type="match status" value="1"/>
</dbReference>
<dbReference type="InterPro" id="IPR045867">
    <property type="entry name" value="DNA-dir_RpoC_beta_prime"/>
</dbReference>
<dbReference type="InterPro" id="IPR012754">
    <property type="entry name" value="DNA-dir_RpoC_beta_prime_bact"/>
</dbReference>
<dbReference type="InterPro" id="IPR000722">
    <property type="entry name" value="RNA_pol_asu"/>
</dbReference>
<dbReference type="InterPro" id="IPR006592">
    <property type="entry name" value="RNA_pol_N"/>
</dbReference>
<dbReference type="InterPro" id="IPR007080">
    <property type="entry name" value="RNA_pol_Rpb1_1"/>
</dbReference>
<dbReference type="InterPro" id="IPR007066">
    <property type="entry name" value="RNA_pol_Rpb1_3"/>
</dbReference>
<dbReference type="InterPro" id="IPR042102">
    <property type="entry name" value="RNA_pol_Rpb1_3_sf"/>
</dbReference>
<dbReference type="InterPro" id="IPR007083">
    <property type="entry name" value="RNA_pol_Rpb1_4"/>
</dbReference>
<dbReference type="InterPro" id="IPR007081">
    <property type="entry name" value="RNA_pol_Rpb1_5"/>
</dbReference>
<dbReference type="InterPro" id="IPR044893">
    <property type="entry name" value="RNA_pol_Rpb1_clamp_domain"/>
</dbReference>
<dbReference type="InterPro" id="IPR038120">
    <property type="entry name" value="Rpb1_funnel_sf"/>
</dbReference>
<dbReference type="NCBIfam" id="TIGR02386">
    <property type="entry name" value="rpoC_TIGR"/>
    <property type="match status" value="1"/>
</dbReference>
<dbReference type="PANTHER" id="PTHR19376">
    <property type="entry name" value="DNA-DIRECTED RNA POLYMERASE"/>
    <property type="match status" value="1"/>
</dbReference>
<dbReference type="PANTHER" id="PTHR19376:SF54">
    <property type="entry name" value="DNA-DIRECTED RNA POLYMERASE SUBUNIT BETA"/>
    <property type="match status" value="1"/>
</dbReference>
<dbReference type="Pfam" id="PF04997">
    <property type="entry name" value="RNA_pol_Rpb1_1"/>
    <property type="match status" value="1"/>
</dbReference>
<dbReference type="Pfam" id="PF00623">
    <property type="entry name" value="RNA_pol_Rpb1_2"/>
    <property type="match status" value="2"/>
</dbReference>
<dbReference type="Pfam" id="PF04983">
    <property type="entry name" value="RNA_pol_Rpb1_3"/>
    <property type="match status" value="1"/>
</dbReference>
<dbReference type="Pfam" id="PF05000">
    <property type="entry name" value="RNA_pol_Rpb1_4"/>
    <property type="match status" value="1"/>
</dbReference>
<dbReference type="Pfam" id="PF04998">
    <property type="entry name" value="RNA_pol_Rpb1_5"/>
    <property type="match status" value="1"/>
</dbReference>
<dbReference type="SMART" id="SM00663">
    <property type="entry name" value="RPOLA_N"/>
    <property type="match status" value="1"/>
</dbReference>
<dbReference type="SUPFAM" id="SSF64484">
    <property type="entry name" value="beta and beta-prime subunits of DNA dependent RNA-polymerase"/>
    <property type="match status" value="1"/>
</dbReference>
<keyword id="KW-0240">DNA-directed RNA polymerase</keyword>
<keyword id="KW-0460">Magnesium</keyword>
<keyword id="KW-0479">Metal-binding</keyword>
<keyword id="KW-0548">Nucleotidyltransferase</keyword>
<keyword id="KW-0804">Transcription</keyword>
<keyword id="KW-0808">Transferase</keyword>
<keyword id="KW-0862">Zinc</keyword>